<gene>
    <name evidence="1" type="primary">ndk</name>
    <name type="ordered locus">HDEF_0747</name>
</gene>
<evidence type="ECO:0000255" key="1">
    <source>
        <dbReference type="HAMAP-Rule" id="MF_00451"/>
    </source>
</evidence>
<proteinExistence type="inferred from homology"/>
<reference key="1">
    <citation type="journal article" date="2009" name="Proc. Natl. Acad. Sci. U.S.A.">
        <title>Hamiltonella defensa, genome evolution of protective bacterial endosymbiont from pathogenic ancestors.</title>
        <authorList>
            <person name="Degnan P.H."/>
            <person name="Yu Y."/>
            <person name="Sisneros N."/>
            <person name="Wing R.A."/>
            <person name="Moran N.A."/>
        </authorList>
    </citation>
    <scope>NUCLEOTIDE SEQUENCE [LARGE SCALE GENOMIC DNA]</scope>
    <source>
        <strain>5AT</strain>
    </source>
</reference>
<organism>
    <name type="scientific">Hamiltonella defensa subsp. Acyrthosiphon pisum (strain 5AT)</name>
    <dbReference type="NCBI Taxonomy" id="572265"/>
    <lineage>
        <taxon>Bacteria</taxon>
        <taxon>Pseudomonadati</taxon>
        <taxon>Pseudomonadota</taxon>
        <taxon>Gammaproteobacteria</taxon>
        <taxon>Enterobacterales</taxon>
        <taxon>Enterobacteriaceae</taxon>
        <taxon>aphid secondary symbionts</taxon>
        <taxon>Candidatus Hamiltonella</taxon>
    </lineage>
</organism>
<feature type="chain" id="PRO_1000206214" description="Nucleoside diphosphate kinase">
    <location>
        <begin position="1"/>
        <end position="141"/>
    </location>
</feature>
<feature type="active site" description="Pros-phosphohistidine intermediate" evidence="1">
    <location>
        <position position="117"/>
    </location>
</feature>
<feature type="binding site" evidence="1">
    <location>
        <position position="11"/>
    </location>
    <ligand>
        <name>ATP</name>
        <dbReference type="ChEBI" id="CHEBI:30616"/>
    </ligand>
</feature>
<feature type="binding site" evidence="1">
    <location>
        <position position="59"/>
    </location>
    <ligand>
        <name>ATP</name>
        <dbReference type="ChEBI" id="CHEBI:30616"/>
    </ligand>
</feature>
<feature type="binding site" evidence="1">
    <location>
        <position position="87"/>
    </location>
    <ligand>
        <name>ATP</name>
        <dbReference type="ChEBI" id="CHEBI:30616"/>
    </ligand>
</feature>
<feature type="binding site" evidence="1">
    <location>
        <position position="93"/>
    </location>
    <ligand>
        <name>ATP</name>
        <dbReference type="ChEBI" id="CHEBI:30616"/>
    </ligand>
</feature>
<feature type="binding site" evidence="1">
    <location>
        <position position="104"/>
    </location>
    <ligand>
        <name>ATP</name>
        <dbReference type="ChEBI" id="CHEBI:30616"/>
    </ligand>
</feature>
<feature type="binding site" evidence="1">
    <location>
        <position position="114"/>
    </location>
    <ligand>
        <name>ATP</name>
        <dbReference type="ChEBI" id="CHEBI:30616"/>
    </ligand>
</feature>
<accession>C4K4I4</accession>
<protein>
    <recommendedName>
        <fullName evidence="1">Nucleoside diphosphate kinase</fullName>
        <shortName evidence="1">NDK</shortName>
        <shortName evidence="1">NDP kinase</shortName>
        <ecNumber evidence="1">2.7.4.6</ecNumber>
    </recommendedName>
    <alternativeName>
        <fullName evidence="1">Nucleoside-2-P kinase</fullName>
    </alternativeName>
</protein>
<dbReference type="EC" id="2.7.4.6" evidence="1"/>
<dbReference type="EMBL" id="CP001277">
    <property type="protein sequence ID" value="ACQ67477.1"/>
    <property type="molecule type" value="Genomic_DNA"/>
</dbReference>
<dbReference type="RefSeq" id="WP_015873297.1">
    <property type="nucleotide sequence ID" value="NC_012751.1"/>
</dbReference>
<dbReference type="SMR" id="C4K4I4"/>
<dbReference type="STRING" id="572265.HDEF_0747"/>
<dbReference type="GeneID" id="66260597"/>
<dbReference type="KEGG" id="hde:HDEF_0747"/>
<dbReference type="eggNOG" id="COG0105">
    <property type="taxonomic scope" value="Bacteria"/>
</dbReference>
<dbReference type="HOGENOM" id="CLU_060216_8_1_6"/>
<dbReference type="Proteomes" id="UP000002334">
    <property type="component" value="Chromosome"/>
</dbReference>
<dbReference type="GO" id="GO:0005737">
    <property type="term" value="C:cytoplasm"/>
    <property type="evidence" value="ECO:0007669"/>
    <property type="project" value="UniProtKB-SubCell"/>
</dbReference>
<dbReference type="GO" id="GO:0005524">
    <property type="term" value="F:ATP binding"/>
    <property type="evidence" value="ECO:0007669"/>
    <property type="project" value="UniProtKB-UniRule"/>
</dbReference>
<dbReference type="GO" id="GO:0046872">
    <property type="term" value="F:metal ion binding"/>
    <property type="evidence" value="ECO:0007669"/>
    <property type="project" value="UniProtKB-KW"/>
</dbReference>
<dbReference type="GO" id="GO:0004550">
    <property type="term" value="F:nucleoside diphosphate kinase activity"/>
    <property type="evidence" value="ECO:0007669"/>
    <property type="project" value="UniProtKB-UniRule"/>
</dbReference>
<dbReference type="GO" id="GO:0006241">
    <property type="term" value="P:CTP biosynthetic process"/>
    <property type="evidence" value="ECO:0007669"/>
    <property type="project" value="UniProtKB-UniRule"/>
</dbReference>
<dbReference type="GO" id="GO:0006183">
    <property type="term" value="P:GTP biosynthetic process"/>
    <property type="evidence" value="ECO:0007669"/>
    <property type="project" value="UniProtKB-UniRule"/>
</dbReference>
<dbReference type="GO" id="GO:0006228">
    <property type="term" value="P:UTP biosynthetic process"/>
    <property type="evidence" value="ECO:0007669"/>
    <property type="project" value="UniProtKB-UniRule"/>
</dbReference>
<dbReference type="CDD" id="cd04413">
    <property type="entry name" value="NDPk_I"/>
    <property type="match status" value="1"/>
</dbReference>
<dbReference type="FunFam" id="3.30.70.141:FF:000039">
    <property type="entry name" value="Nucleoside diphosphate kinase B"/>
    <property type="match status" value="1"/>
</dbReference>
<dbReference type="Gene3D" id="3.30.70.141">
    <property type="entry name" value="Nucleoside diphosphate kinase-like domain"/>
    <property type="match status" value="1"/>
</dbReference>
<dbReference type="HAMAP" id="MF_00451">
    <property type="entry name" value="NDP_kinase"/>
    <property type="match status" value="1"/>
</dbReference>
<dbReference type="InterPro" id="IPR034907">
    <property type="entry name" value="NDK-like_dom"/>
</dbReference>
<dbReference type="InterPro" id="IPR036850">
    <property type="entry name" value="NDK-like_dom_sf"/>
</dbReference>
<dbReference type="InterPro" id="IPR001564">
    <property type="entry name" value="Nucleoside_diP_kinase"/>
</dbReference>
<dbReference type="InterPro" id="IPR023005">
    <property type="entry name" value="Nucleoside_diP_kinase_AS"/>
</dbReference>
<dbReference type="NCBIfam" id="NF001908">
    <property type="entry name" value="PRK00668.1"/>
    <property type="match status" value="1"/>
</dbReference>
<dbReference type="PANTHER" id="PTHR46161">
    <property type="entry name" value="NUCLEOSIDE DIPHOSPHATE KINASE"/>
    <property type="match status" value="1"/>
</dbReference>
<dbReference type="PANTHER" id="PTHR46161:SF3">
    <property type="entry name" value="NUCLEOSIDE DIPHOSPHATE KINASE DDB_G0292928-RELATED"/>
    <property type="match status" value="1"/>
</dbReference>
<dbReference type="Pfam" id="PF00334">
    <property type="entry name" value="NDK"/>
    <property type="match status" value="1"/>
</dbReference>
<dbReference type="PRINTS" id="PR01243">
    <property type="entry name" value="NUCDPKINASE"/>
</dbReference>
<dbReference type="SMART" id="SM00562">
    <property type="entry name" value="NDK"/>
    <property type="match status" value="1"/>
</dbReference>
<dbReference type="SUPFAM" id="SSF54919">
    <property type="entry name" value="Nucleoside diphosphate kinase, NDK"/>
    <property type="match status" value="1"/>
</dbReference>
<dbReference type="PROSITE" id="PS00469">
    <property type="entry name" value="NDPK"/>
    <property type="match status" value="1"/>
</dbReference>
<dbReference type="PROSITE" id="PS51374">
    <property type="entry name" value="NDPK_LIKE"/>
    <property type="match status" value="1"/>
</dbReference>
<name>NDK_HAMD5</name>
<keyword id="KW-0067">ATP-binding</keyword>
<keyword id="KW-0963">Cytoplasm</keyword>
<keyword id="KW-0418">Kinase</keyword>
<keyword id="KW-0460">Magnesium</keyword>
<keyword id="KW-0479">Metal-binding</keyword>
<keyword id="KW-0546">Nucleotide metabolism</keyword>
<keyword id="KW-0547">Nucleotide-binding</keyword>
<keyword id="KW-0597">Phosphoprotein</keyword>
<keyword id="KW-0808">Transferase</keyword>
<comment type="function">
    <text evidence="1">Major role in the synthesis of nucleoside triphosphates other than ATP. The ATP gamma phosphate is transferred to the NDP beta phosphate via a ping-pong mechanism, using a phosphorylated active-site intermediate.</text>
</comment>
<comment type="catalytic activity">
    <reaction evidence="1">
        <text>a 2'-deoxyribonucleoside 5'-diphosphate + ATP = a 2'-deoxyribonucleoside 5'-triphosphate + ADP</text>
        <dbReference type="Rhea" id="RHEA:44640"/>
        <dbReference type="ChEBI" id="CHEBI:30616"/>
        <dbReference type="ChEBI" id="CHEBI:61560"/>
        <dbReference type="ChEBI" id="CHEBI:73316"/>
        <dbReference type="ChEBI" id="CHEBI:456216"/>
        <dbReference type="EC" id="2.7.4.6"/>
    </reaction>
</comment>
<comment type="catalytic activity">
    <reaction evidence="1">
        <text>a ribonucleoside 5'-diphosphate + ATP = a ribonucleoside 5'-triphosphate + ADP</text>
        <dbReference type="Rhea" id="RHEA:18113"/>
        <dbReference type="ChEBI" id="CHEBI:30616"/>
        <dbReference type="ChEBI" id="CHEBI:57930"/>
        <dbReference type="ChEBI" id="CHEBI:61557"/>
        <dbReference type="ChEBI" id="CHEBI:456216"/>
        <dbReference type="EC" id="2.7.4.6"/>
    </reaction>
</comment>
<comment type="cofactor">
    <cofactor evidence="1">
        <name>Mg(2+)</name>
        <dbReference type="ChEBI" id="CHEBI:18420"/>
    </cofactor>
</comment>
<comment type="subunit">
    <text evidence="1">Homotetramer.</text>
</comment>
<comment type="subcellular location">
    <subcellularLocation>
        <location evidence="1">Cytoplasm</location>
    </subcellularLocation>
</comment>
<comment type="similarity">
    <text evidence="1">Belongs to the NDK family.</text>
</comment>
<sequence length="141" mass="15809">MAVERTFSIIKPKAVTKNVIGAIYTRFETAKLKIISAKMLLLTIEQAEGFYVEHKNRDFFTNLIQSITSGPVMIQVLEGENAVKRNREIMGETDPKKALAGTLRADFGDSLTDNALHGSDSLASAEREIAYFFKFDEIFSR</sequence>